<comment type="function">
    <text evidence="1">Confers resistance to fosfomycin and deoxycholate.</text>
</comment>
<comment type="subcellular location">
    <subcellularLocation>
        <location evidence="1">Cell inner membrane</location>
        <topology evidence="1">Multi-pass membrane protein</topology>
    </subcellularLocation>
</comment>
<comment type="similarity">
    <text evidence="1">Belongs to the major facilitator superfamily. DHA1 family. MdtG (TC 2.A.1.2.20) subfamily.</text>
</comment>
<gene>
    <name evidence="1" type="primary">mdtG</name>
    <name type="ordered locus">ECIAI1_1088</name>
</gene>
<sequence length="408" mass="43867">MSPCENDTPINWKRNLIVAWLGCFLTGAAFSLVMPFLPLYVEQLGVTGHSALNMWSGIVFSITFLFSAIASPFWGGLADRKGRKLMLLRSALGMGIVMVLMGLAQNIWQFLILRALLGLLGGFVPNANALIATQVPRNKSGWALGTLSTGGVSGALLGPMAGGLLADSYGLRPVFFITASVLILCFFVTLFCIREKFQPVSKKEMLHMREVVTSLKNPKLVLSLFVTTLIIQVATGSIAPILTLYVRELAGNVSNVAFISGMIASVPGVAALLSAPRLGKLGDRIGPEKILITALIFSVLLLIPMSYVQTPLQLGILRFLLGAADGALLPAVQTLLVYNSSNQIAGRIFSYNQSFRDIGNVTGPLMGAAISANYGFRAVFLVTAGVVLFNAVYSWNSLRRRRIPQVSN</sequence>
<dbReference type="EMBL" id="CU928160">
    <property type="protein sequence ID" value="CAQ97952.1"/>
    <property type="molecule type" value="Genomic_DNA"/>
</dbReference>
<dbReference type="RefSeq" id="WP_000074172.1">
    <property type="nucleotide sequence ID" value="NC_011741.1"/>
</dbReference>
<dbReference type="SMR" id="B7M928"/>
<dbReference type="GeneID" id="75203640"/>
<dbReference type="KEGG" id="ecr:ECIAI1_1088"/>
<dbReference type="HOGENOM" id="CLU_001265_57_3_6"/>
<dbReference type="GO" id="GO:0005886">
    <property type="term" value="C:plasma membrane"/>
    <property type="evidence" value="ECO:0007669"/>
    <property type="project" value="UniProtKB-SubCell"/>
</dbReference>
<dbReference type="GO" id="GO:0022857">
    <property type="term" value="F:transmembrane transporter activity"/>
    <property type="evidence" value="ECO:0007669"/>
    <property type="project" value="UniProtKB-UniRule"/>
</dbReference>
<dbReference type="GO" id="GO:0046677">
    <property type="term" value="P:response to antibiotic"/>
    <property type="evidence" value="ECO:0007669"/>
    <property type="project" value="UniProtKB-KW"/>
</dbReference>
<dbReference type="CDD" id="cd17391">
    <property type="entry name" value="MFS_MdtG_MDR_like"/>
    <property type="match status" value="1"/>
</dbReference>
<dbReference type="FunFam" id="1.20.1250.20:FF:000020">
    <property type="entry name" value="Multidrug resistance protein MdtG"/>
    <property type="match status" value="1"/>
</dbReference>
<dbReference type="FunFam" id="1.20.1250.20:FF:000022">
    <property type="entry name" value="Multidrug resistance protein MdtG"/>
    <property type="match status" value="1"/>
</dbReference>
<dbReference type="Gene3D" id="1.20.1250.20">
    <property type="entry name" value="MFS general substrate transporter like domains"/>
    <property type="match status" value="2"/>
</dbReference>
<dbReference type="HAMAP" id="MF_01528">
    <property type="entry name" value="MFS_MdtG"/>
    <property type="match status" value="1"/>
</dbReference>
<dbReference type="InterPro" id="IPR011701">
    <property type="entry name" value="MFS"/>
</dbReference>
<dbReference type="InterPro" id="IPR020846">
    <property type="entry name" value="MFS_dom"/>
</dbReference>
<dbReference type="InterPro" id="IPR050497">
    <property type="entry name" value="MFS_MdtG_subfamily"/>
</dbReference>
<dbReference type="InterPro" id="IPR036259">
    <property type="entry name" value="MFS_trans_sf"/>
</dbReference>
<dbReference type="InterPro" id="IPR023692">
    <property type="entry name" value="Mutidrug-R_MdtG"/>
</dbReference>
<dbReference type="InterPro" id="IPR001958">
    <property type="entry name" value="Tet-R_TetA/multi-R_MdtG-like"/>
</dbReference>
<dbReference type="NCBIfam" id="NF007372">
    <property type="entry name" value="PRK09874.1"/>
    <property type="match status" value="1"/>
</dbReference>
<dbReference type="PANTHER" id="PTHR43414">
    <property type="entry name" value="MULTIDRUG RESISTANCE PROTEIN MDTG"/>
    <property type="match status" value="1"/>
</dbReference>
<dbReference type="PANTHER" id="PTHR43414:SF6">
    <property type="entry name" value="MULTIDRUG RESISTANCE PROTEIN MDTG"/>
    <property type="match status" value="1"/>
</dbReference>
<dbReference type="Pfam" id="PF07690">
    <property type="entry name" value="MFS_1"/>
    <property type="match status" value="1"/>
</dbReference>
<dbReference type="PRINTS" id="PR01035">
    <property type="entry name" value="TCRTETA"/>
</dbReference>
<dbReference type="SUPFAM" id="SSF103473">
    <property type="entry name" value="MFS general substrate transporter"/>
    <property type="match status" value="1"/>
</dbReference>
<dbReference type="PROSITE" id="PS50850">
    <property type="entry name" value="MFS"/>
    <property type="match status" value="1"/>
</dbReference>
<organism>
    <name type="scientific">Escherichia coli O8 (strain IAI1)</name>
    <dbReference type="NCBI Taxonomy" id="585034"/>
    <lineage>
        <taxon>Bacteria</taxon>
        <taxon>Pseudomonadati</taxon>
        <taxon>Pseudomonadota</taxon>
        <taxon>Gammaproteobacteria</taxon>
        <taxon>Enterobacterales</taxon>
        <taxon>Enterobacteriaceae</taxon>
        <taxon>Escherichia</taxon>
    </lineage>
</organism>
<keyword id="KW-0046">Antibiotic resistance</keyword>
<keyword id="KW-0997">Cell inner membrane</keyword>
<keyword id="KW-1003">Cell membrane</keyword>
<keyword id="KW-0472">Membrane</keyword>
<keyword id="KW-0812">Transmembrane</keyword>
<keyword id="KW-1133">Transmembrane helix</keyword>
<keyword id="KW-0813">Transport</keyword>
<protein>
    <recommendedName>
        <fullName evidence="1">Multidrug resistance protein MdtG</fullName>
    </recommendedName>
</protein>
<feature type="chain" id="PRO_1000200785" description="Multidrug resistance protein MdtG">
    <location>
        <begin position="1"/>
        <end position="408"/>
    </location>
</feature>
<feature type="transmembrane region" description="Helical" evidence="1">
    <location>
        <begin position="16"/>
        <end position="36"/>
    </location>
</feature>
<feature type="transmembrane region" description="Helical" evidence="1">
    <location>
        <begin position="58"/>
        <end position="78"/>
    </location>
</feature>
<feature type="transmembrane region" description="Helical" evidence="1">
    <location>
        <begin position="92"/>
        <end position="112"/>
    </location>
</feature>
<feature type="transmembrane region" description="Helical" evidence="1">
    <location>
        <begin position="115"/>
        <end position="135"/>
    </location>
</feature>
<feature type="transmembrane region" description="Helical" evidence="1">
    <location>
        <begin position="146"/>
        <end position="166"/>
    </location>
</feature>
<feature type="transmembrane region" description="Helical" evidence="1">
    <location>
        <begin position="173"/>
        <end position="193"/>
    </location>
</feature>
<feature type="transmembrane region" description="Helical" evidence="1">
    <location>
        <begin position="224"/>
        <end position="244"/>
    </location>
</feature>
<feature type="transmembrane region" description="Helical" evidence="1">
    <location>
        <begin position="256"/>
        <end position="276"/>
    </location>
</feature>
<feature type="transmembrane region" description="Helical" evidence="1">
    <location>
        <begin position="290"/>
        <end position="310"/>
    </location>
</feature>
<feature type="transmembrane region" description="Helical" evidence="1">
    <location>
        <begin position="319"/>
        <end position="339"/>
    </location>
</feature>
<feature type="transmembrane region" description="Helical" evidence="1">
    <location>
        <begin position="378"/>
        <end position="398"/>
    </location>
</feature>
<name>MDTG_ECO8A</name>
<proteinExistence type="inferred from homology"/>
<accession>B7M928</accession>
<reference key="1">
    <citation type="journal article" date="2009" name="PLoS Genet.">
        <title>Organised genome dynamics in the Escherichia coli species results in highly diverse adaptive paths.</title>
        <authorList>
            <person name="Touchon M."/>
            <person name="Hoede C."/>
            <person name="Tenaillon O."/>
            <person name="Barbe V."/>
            <person name="Baeriswyl S."/>
            <person name="Bidet P."/>
            <person name="Bingen E."/>
            <person name="Bonacorsi S."/>
            <person name="Bouchier C."/>
            <person name="Bouvet O."/>
            <person name="Calteau A."/>
            <person name="Chiapello H."/>
            <person name="Clermont O."/>
            <person name="Cruveiller S."/>
            <person name="Danchin A."/>
            <person name="Diard M."/>
            <person name="Dossat C."/>
            <person name="Karoui M.E."/>
            <person name="Frapy E."/>
            <person name="Garry L."/>
            <person name="Ghigo J.M."/>
            <person name="Gilles A.M."/>
            <person name="Johnson J."/>
            <person name="Le Bouguenec C."/>
            <person name="Lescat M."/>
            <person name="Mangenot S."/>
            <person name="Martinez-Jehanne V."/>
            <person name="Matic I."/>
            <person name="Nassif X."/>
            <person name="Oztas S."/>
            <person name="Petit M.A."/>
            <person name="Pichon C."/>
            <person name="Rouy Z."/>
            <person name="Ruf C.S."/>
            <person name="Schneider D."/>
            <person name="Tourret J."/>
            <person name="Vacherie B."/>
            <person name="Vallenet D."/>
            <person name="Medigue C."/>
            <person name="Rocha E.P.C."/>
            <person name="Denamur E."/>
        </authorList>
    </citation>
    <scope>NUCLEOTIDE SEQUENCE [LARGE SCALE GENOMIC DNA]</scope>
    <source>
        <strain>IAI1</strain>
    </source>
</reference>
<evidence type="ECO:0000255" key="1">
    <source>
        <dbReference type="HAMAP-Rule" id="MF_01528"/>
    </source>
</evidence>